<keyword id="KW-0238">DNA-binding</keyword>
<keyword id="KW-0371">Homeobox</keyword>
<keyword id="KW-0539">Nucleus</keyword>
<keyword id="KW-1185">Reference proteome</keyword>
<keyword id="KW-0804">Transcription</keyword>
<keyword id="KW-0805">Transcription regulation</keyword>
<accession>Q8MID6</accession>
<sequence>MEAAADGPAETRSRVEKDSRRAIKDSPAKTQSPAQDTSIMLRNNADTGKVPALPEHKKKRKGYSPAESVKILRDWMYKHRFRAYPSEAEKRMLSKKTNLSLSQISNWFINARRRILPDMLQRRGNDPIVGHKTGKDAHATHLRSTDASVPAKSGPRGSDNVQSLPLRSSPKGQMSGEKIPEPGSAPSQKLTMIAQPKKKVKVSNITSLSSPEPVSTEEYADFSSFQLLVDAAVQRAAELELEKKQESNP</sequence>
<evidence type="ECO:0000250" key="1"/>
<evidence type="ECO:0000255" key="2">
    <source>
        <dbReference type="PROSITE-ProRule" id="PRU00108"/>
    </source>
</evidence>
<evidence type="ECO:0000256" key="3">
    <source>
        <dbReference type="SAM" id="MobiDB-lite"/>
    </source>
</evidence>
<evidence type="ECO:0000305" key="4"/>
<comment type="function">
    <text evidence="1">May have a transcription role in testis.</text>
</comment>
<comment type="subcellular location">
    <subcellularLocation>
        <location evidence="2">Nucleus</location>
    </subcellularLocation>
</comment>
<comment type="similarity">
    <text evidence="4">Belongs to the TALE/TGIF homeobox family.</text>
</comment>
<dbReference type="EMBL" id="AJ345078">
    <property type="protein sequence ID" value="CAC87900.1"/>
    <property type="molecule type" value="mRNA"/>
</dbReference>
<dbReference type="RefSeq" id="NP_001028060.1">
    <property type="nucleotide sequence ID" value="NM_001032888.1"/>
</dbReference>
<dbReference type="SMR" id="Q8MID6"/>
<dbReference type="FunCoup" id="Q8MID6">
    <property type="interactions" value="18"/>
</dbReference>
<dbReference type="STRING" id="9544.ENSMMUP00000040939"/>
<dbReference type="PaxDb" id="9544-ENSMMUP00000040939"/>
<dbReference type="GeneID" id="574239"/>
<dbReference type="KEGG" id="mcc:574239"/>
<dbReference type="CTD" id="90316"/>
<dbReference type="eggNOG" id="KOG0773">
    <property type="taxonomic scope" value="Eukaryota"/>
</dbReference>
<dbReference type="InParanoid" id="Q8MID6"/>
<dbReference type="OrthoDB" id="10056939at2759"/>
<dbReference type="Proteomes" id="UP000006718">
    <property type="component" value="Unassembled WGS sequence"/>
</dbReference>
<dbReference type="GO" id="GO:0005634">
    <property type="term" value="C:nucleus"/>
    <property type="evidence" value="ECO:0007669"/>
    <property type="project" value="UniProtKB-SubCell"/>
</dbReference>
<dbReference type="GO" id="GO:0003677">
    <property type="term" value="F:DNA binding"/>
    <property type="evidence" value="ECO:0007669"/>
    <property type="project" value="UniProtKB-KW"/>
</dbReference>
<dbReference type="GO" id="GO:0001227">
    <property type="term" value="F:DNA-binding transcription repressor activity, RNA polymerase II-specific"/>
    <property type="evidence" value="ECO:0000318"/>
    <property type="project" value="GO_Central"/>
</dbReference>
<dbReference type="GO" id="GO:0000122">
    <property type="term" value="P:negative regulation of transcription by RNA polymerase II"/>
    <property type="evidence" value="ECO:0000318"/>
    <property type="project" value="GO_Central"/>
</dbReference>
<dbReference type="CDD" id="cd00086">
    <property type="entry name" value="homeodomain"/>
    <property type="match status" value="1"/>
</dbReference>
<dbReference type="FunFam" id="1.10.10.60:FF:000059">
    <property type="entry name" value="TGFB-induced factor homeobox 1"/>
    <property type="match status" value="1"/>
</dbReference>
<dbReference type="Gene3D" id="1.10.10.60">
    <property type="entry name" value="Homeodomain-like"/>
    <property type="match status" value="1"/>
</dbReference>
<dbReference type="InterPro" id="IPR001356">
    <property type="entry name" value="HD"/>
</dbReference>
<dbReference type="InterPro" id="IPR009057">
    <property type="entry name" value="Homeodomain-like_sf"/>
</dbReference>
<dbReference type="InterPro" id="IPR008422">
    <property type="entry name" value="KN_HD"/>
</dbReference>
<dbReference type="InterPro" id="IPR050224">
    <property type="entry name" value="TALE_homeobox"/>
</dbReference>
<dbReference type="PANTHER" id="PTHR11850">
    <property type="entry name" value="HOMEOBOX PROTEIN TRANSCRIPTION FACTORS"/>
    <property type="match status" value="1"/>
</dbReference>
<dbReference type="Pfam" id="PF05920">
    <property type="entry name" value="Homeobox_KN"/>
    <property type="match status" value="1"/>
</dbReference>
<dbReference type="SMART" id="SM00389">
    <property type="entry name" value="HOX"/>
    <property type="match status" value="1"/>
</dbReference>
<dbReference type="SUPFAM" id="SSF46689">
    <property type="entry name" value="Homeodomain-like"/>
    <property type="match status" value="1"/>
</dbReference>
<dbReference type="PROSITE" id="PS50071">
    <property type="entry name" value="HOMEOBOX_2"/>
    <property type="match status" value="1"/>
</dbReference>
<name>TF2LX_MACMU</name>
<gene>
    <name type="primary">TGIF2LX</name>
    <name type="synonym">TGIFLX</name>
</gene>
<protein>
    <recommendedName>
        <fullName>Homeobox protein TGIF2LX</fullName>
    </recommendedName>
    <alternativeName>
        <fullName>TGF-beta-induced transcription factor 2-like protein</fullName>
    </alternativeName>
    <alternativeName>
        <fullName>TGFB-induced factor 2-like protein, X-linked</fullName>
    </alternativeName>
    <alternativeName>
        <fullName>TGIF-like on the X</fullName>
    </alternativeName>
</protein>
<feature type="chain" id="PRO_0000049327" description="Homeobox protein TGIF2LX">
    <location>
        <begin position="1"/>
        <end position="249"/>
    </location>
</feature>
<feature type="DNA-binding region" description="Homeobox; TALE-type" evidence="2">
    <location>
        <begin position="55"/>
        <end position="118"/>
    </location>
</feature>
<feature type="region of interest" description="Disordered" evidence="3">
    <location>
        <begin position="1"/>
        <end position="65"/>
    </location>
</feature>
<feature type="region of interest" description="Disordered" evidence="3">
    <location>
        <begin position="126"/>
        <end position="199"/>
    </location>
</feature>
<feature type="compositionally biased region" description="Basic and acidic residues" evidence="3">
    <location>
        <begin position="9"/>
        <end position="27"/>
    </location>
</feature>
<feature type="compositionally biased region" description="Polar residues" evidence="3">
    <location>
        <begin position="28"/>
        <end position="46"/>
    </location>
</feature>
<feature type="compositionally biased region" description="Polar residues" evidence="3">
    <location>
        <begin position="159"/>
        <end position="172"/>
    </location>
</feature>
<proteinExistence type="evidence at transcript level"/>
<reference key="1">
    <citation type="submission" date="2001-09" db="EMBL/GenBank/DDBJ databases">
        <title>Characterisation of a TGIF-like protein gene in the human Xq21.3-Yp11.2 homology block.</title>
        <authorList>
            <person name="Blanco-Arias P."/>
        </authorList>
    </citation>
    <scope>NUCLEOTIDE SEQUENCE [MRNA]</scope>
</reference>
<organism>
    <name type="scientific">Macaca mulatta</name>
    <name type="common">Rhesus macaque</name>
    <dbReference type="NCBI Taxonomy" id="9544"/>
    <lineage>
        <taxon>Eukaryota</taxon>
        <taxon>Metazoa</taxon>
        <taxon>Chordata</taxon>
        <taxon>Craniata</taxon>
        <taxon>Vertebrata</taxon>
        <taxon>Euteleostomi</taxon>
        <taxon>Mammalia</taxon>
        <taxon>Eutheria</taxon>
        <taxon>Euarchontoglires</taxon>
        <taxon>Primates</taxon>
        <taxon>Haplorrhini</taxon>
        <taxon>Catarrhini</taxon>
        <taxon>Cercopithecidae</taxon>
        <taxon>Cercopithecinae</taxon>
        <taxon>Macaca</taxon>
    </lineage>
</organism>